<sequence length="273" mass="29509">MSDIHSLLVAAILGVVEGLTEFLPVSSTGHMIIVGHLLGFEGDTANTFEVVIQLGSILAVVVMFWRRLFGLIGIHFGKPPAHEGQGSGRLSLIHILLGMIPAVVMGLIFHDTIKSLFNPVNVMYALIVGGVLLIAAEVLKPKQPRAVGIDDMTYRQAFVIGCFQCLALWPGFSRSGATISGGMLMGVSRYAASEFSFLLAVPMMMGATVLDVYKSIGFLNMGDVPMFAVGFVMAFIVALIAIKTFLQLIKRISFIPFAIYRFIVAAAVYVVFF</sequence>
<comment type="function">
    <text evidence="1">Catalyzes the dephosphorylation of undecaprenyl diphosphate (UPP). Confers resistance to bacitracin.</text>
</comment>
<comment type="catalytic activity">
    <reaction evidence="1">
        <text>di-trans,octa-cis-undecaprenyl diphosphate + H2O = di-trans,octa-cis-undecaprenyl phosphate + phosphate + H(+)</text>
        <dbReference type="Rhea" id="RHEA:28094"/>
        <dbReference type="ChEBI" id="CHEBI:15377"/>
        <dbReference type="ChEBI" id="CHEBI:15378"/>
        <dbReference type="ChEBI" id="CHEBI:43474"/>
        <dbReference type="ChEBI" id="CHEBI:58405"/>
        <dbReference type="ChEBI" id="CHEBI:60392"/>
        <dbReference type="EC" id="3.6.1.27"/>
    </reaction>
</comment>
<comment type="subcellular location">
    <subcellularLocation>
        <location evidence="1">Cell inner membrane</location>
        <topology evidence="1">Multi-pass membrane protein</topology>
    </subcellularLocation>
</comment>
<comment type="miscellaneous">
    <text>Bacitracin is thought to be involved in the inhibition of peptidoglycan synthesis by sequestering undecaprenyl diphosphate, thereby reducing the pool of lipid carrier available.</text>
</comment>
<comment type="similarity">
    <text evidence="1">Belongs to the UppP family.</text>
</comment>
<accession>A6TE36</accession>
<gene>
    <name evidence="1" type="primary">uppP</name>
    <name type="ordered locus">KPN78578_33960</name>
    <name type="ORF">KPN_03461</name>
</gene>
<dbReference type="EC" id="3.6.1.27" evidence="1"/>
<dbReference type="EMBL" id="CP000647">
    <property type="protein sequence ID" value="ABR78857.1"/>
    <property type="molecule type" value="Genomic_DNA"/>
</dbReference>
<dbReference type="SMR" id="A6TE36"/>
<dbReference type="STRING" id="272620.KPN_03461"/>
<dbReference type="PaxDb" id="272620-KPN_03461"/>
<dbReference type="EnsemblBacteria" id="ABR78857">
    <property type="protein sequence ID" value="ABR78857"/>
    <property type="gene ID" value="KPN_03461"/>
</dbReference>
<dbReference type="KEGG" id="kpn:KPN_03461"/>
<dbReference type="HOGENOM" id="CLU_060296_2_0_6"/>
<dbReference type="Proteomes" id="UP000000265">
    <property type="component" value="Chromosome"/>
</dbReference>
<dbReference type="GO" id="GO:0005886">
    <property type="term" value="C:plasma membrane"/>
    <property type="evidence" value="ECO:0007669"/>
    <property type="project" value="UniProtKB-SubCell"/>
</dbReference>
<dbReference type="GO" id="GO:0050380">
    <property type="term" value="F:undecaprenyl-diphosphatase activity"/>
    <property type="evidence" value="ECO:0007669"/>
    <property type="project" value="UniProtKB-UniRule"/>
</dbReference>
<dbReference type="GO" id="GO:0071555">
    <property type="term" value="P:cell wall organization"/>
    <property type="evidence" value="ECO:0007669"/>
    <property type="project" value="UniProtKB-KW"/>
</dbReference>
<dbReference type="GO" id="GO:0009252">
    <property type="term" value="P:peptidoglycan biosynthetic process"/>
    <property type="evidence" value="ECO:0007669"/>
    <property type="project" value="UniProtKB-KW"/>
</dbReference>
<dbReference type="GO" id="GO:0008360">
    <property type="term" value="P:regulation of cell shape"/>
    <property type="evidence" value="ECO:0007669"/>
    <property type="project" value="UniProtKB-KW"/>
</dbReference>
<dbReference type="GO" id="GO:0046677">
    <property type="term" value="P:response to antibiotic"/>
    <property type="evidence" value="ECO:0007669"/>
    <property type="project" value="UniProtKB-UniRule"/>
</dbReference>
<dbReference type="HAMAP" id="MF_01006">
    <property type="entry name" value="Undec_diphosphatase"/>
    <property type="match status" value="1"/>
</dbReference>
<dbReference type="InterPro" id="IPR003824">
    <property type="entry name" value="UppP"/>
</dbReference>
<dbReference type="NCBIfam" id="NF001388">
    <property type="entry name" value="PRK00281.1-1"/>
    <property type="match status" value="1"/>
</dbReference>
<dbReference type="NCBIfam" id="NF001389">
    <property type="entry name" value="PRK00281.1-2"/>
    <property type="match status" value="1"/>
</dbReference>
<dbReference type="NCBIfam" id="NF001390">
    <property type="entry name" value="PRK00281.1-4"/>
    <property type="match status" value="1"/>
</dbReference>
<dbReference type="NCBIfam" id="TIGR00753">
    <property type="entry name" value="undec_PP_bacA"/>
    <property type="match status" value="1"/>
</dbReference>
<dbReference type="PANTHER" id="PTHR30622">
    <property type="entry name" value="UNDECAPRENYL-DIPHOSPHATASE"/>
    <property type="match status" value="1"/>
</dbReference>
<dbReference type="PANTHER" id="PTHR30622:SF3">
    <property type="entry name" value="UNDECAPRENYL-DIPHOSPHATASE"/>
    <property type="match status" value="1"/>
</dbReference>
<dbReference type="Pfam" id="PF02673">
    <property type="entry name" value="BacA"/>
    <property type="match status" value="1"/>
</dbReference>
<protein>
    <recommendedName>
        <fullName evidence="1">Undecaprenyl-diphosphatase</fullName>
        <ecNumber evidence="1">3.6.1.27</ecNumber>
    </recommendedName>
    <alternativeName>
        <fullName evidence="1">Bacitracin resistance protein</fullName>
    </alternativeName>
    <alternativeName>
        <fullName evidence="1">Undecaprenyl pyrophosphate phosphatase</fullName>
    </alternativeName>
</protein>
<proteinExistence type="inferred from homology"/>
<reference key="1">
    <citation type="submission" date="2006-09" db="EMBL/GenBank/DDBJ databases">
        <authorList>
            <consortium name="The Klebsiella pneumonia Genome Sequencing Project"/>
            <person name="McClelland M."/>
            <person name="Sanderson E.K."/>
            <person name="Spieth J."/>
            <person name="Clifton W.S."/>
            <person name="Latreille P."/>
            <person name="Sabo A."/>
            <person name="Pepin K."/>
            <person name="Bhonagiri V."/>
            <person name="Porwollik S."/>
            <person name="Ali J."/>
            <person name="Wilson R.K."/>
        </authorList>
    </citation>
    <scope>NUCLEOTIDE SEQUENCE [LARGE SCALE GENOMIC DNA]</scope>
    <source>
        <strain>ATCC 700721 / MGH 78578</strain>
    </source>
</reference>
<feature type="chain" id="PRO_1000062801" description="Undecaprenyl-diphosphatase">
    <location>
        <begin position="1"/>
        <end position="273"/>
    </location>
</feature>
<feature type="transmembrane region" description="Helical" evidence="1">
    <location>
        <begin position="13"/>
        <end position="35"/>
    </location>
</feature>
<feature type="transmembrane region" description="Helical" evidence="1">
    <location>
        <begin position="45"/>
        <end position="65"/>
    </location>
</feature>
<feature type="transmembrane region" description="Helical" evidence="1">
    <location>
        <begin position="90"/>
        <end position="110"/>
    </location>
</feature>
<feature type="transmembrane region" description="Helical" evidence="1">
    <location>
        <begin position="116"/>
        <end position="136"/>
    </location>
</feature>
<feature type="transmembrane region" description="Helical" evidence="1">
    <location>
        <begin position="157"/>
        <end position="177"/>
    </location>
</feature>
<feature type="transmembrane region" description="Helical" evidence="1">
    <location>
        <begin position="190"/>
        <end position="210"/>
    </location>
</feature>
<feature type="transmembrane region" description="Helical" evidence="1">
    <location>
        <begin position="222"/>
        <end position="242"/>
    </location>
</feature>
<feature type="transmembrane region" description="Helical" evidence="1">
    <location>
        <begin position="252"/>
        <end position="272"/>
    </location>
</feature>
<name>UPPP_KLEP7</name>
<evidence type="ECO:0000255" key="1">
    <source>
        <dbReference type="HAMAP-Rule" id="MF_01006"/>
    </source>
</evidence>
<keyword id="KW-0046">Antibiotic resistance</keyword>
<keyword id="KW-0997">Cell inner membrane</keyword>
<keyword id="KW-1003">Cell membrane</keyword>
<keyword id="KW-0133">Cell shape</keyword>
<keyword id="KW-0961">Cell wall biogenesis/degradation</keyword>
<keyword id="KW-0378">Hydrolase</keyword>
<keyword id="KW-0472">Membrane</keyword>
<keyword id="KW-0573">Peptidoglycan synthesis</keyword>
<keyword id="KW-0812">Transmembrane</keyword>
<keyword id="KW-1133">Transmembrane helix</keyword>
<organism>
    <name type="scientific">Klebsiella pneumoniae subsp. pneumoniae (strain ATCC 700721 / MGH 78578)</name>
    <dbReference type="NCBI Taxonomy" id="272620"/>
    <lineage>
        <taxon>Bacteria</taxon>
        <taxon>Pseudomonadati</taxon>
        <taxon>Pseudomonadota</taxon>
        <taxon>Gammaproteobacteria</taxon>
        <taxon>Enterobacterales</taxon>
        <taxon>Enterobacteriaceae</taxon>
        <taxon>Klebsiella/Raoultella group</taxon>
        <taxon>Klebsiella</taxon>
        <taxon>Klebsiella pneumoniae complex</taxon>
    </lineage>
</organism>